<proteinExistence type="evidence at transcript level"/>
<protein>
    <recommendedName>
        <fullName>Sushi repeat-containing protein SRPX2</fullName>
    </recommendedName>
</protein>
<sequence length="465" mass="53068">MAIQLTRRGALSLLLFLTPAVMPTWYAGSGYYPDESYNEVYAEEVPQTPILDYKVPRWCYTLNIQDGEATCYSPRGGNYHSSLGTRCELSCDRGFRLIGRRSVQCLPSRRWSGTAYCRQMRCHALPFITSGTYTCTNGVLLDSRCDYSCSSGYHLEGDRSRICMEDGRWSGGEPVCVDIDPPKIRCPHSREKMAEPEKLTARVYWDPPVVKDSADGTITRLTLRGPEPGSHFPEGEHVIRYTAYDRAYNRASCKFIVKVQVRRCPTLKPPLHGYLTCTSAGDNYGATCEYHCDGGYERQGTSSRVCQSSRQWSGSPPVCVPMKINVNVNSAAGLLDQFYEKRRLLIISAPDPSNRYYKMQISMLQQSTCGLDLRHVTIIELVGQPPQEVGRIREHQLSANIIEELRQFQHLTRSYFNMVLIDKQGIDRERYMEPVTPEEIFTFIDDYLLSNEELIQRREQRDICD</sequence>
<name>SRPX2_BOVIN</name>
<dbReference type="EMBL" id="BT020744">
    <property type="protein sequence ID" value="AAX08761.1"/>
    <property type="molecule type" value="mRNA"/>
</dbReference>
<dbReference type="RefSeq" id="NP_001014926.1">
    <property type="nucleotide sequence ID" value="NM_001014926.1"/>
</dbReference>
<dbReference type="FunCoup" id="Q5EA25">
    <property type="interactions" value="272"/>
</dbReference>
<dbReference type="STRING" id="9913.ENSBTAP00000049519"/>
<dbReference type="PaxDb" id="9913-ENSBTAP00000049519"/>
<dbReference type="GeneID" id="514742"/>
<dbReference type="KEGG" id="bta:514742"/>
<dbReference type="CTD" id="27286"/>
<dbReference type="eggNOG" id="ENOG502QREP">
    <property type="taxonomic scope" value="Eukaryota"/>
</dbReference>
<dbReference type="InParanoid" id="Q5EA25"/>
<dbReference type="OrthoDB" id="6136178at2759"/>
<dbReference type="Proteomes" id="UP000009136">
    <property type="component" value="Unplaced"/>
</dbReference>
<dbReference type="GO" id="GO:0009986">
    <property type="term" value="C:cell surface"/>
    <property type="evidence" value="ECO:0000250"/>
    <property type="project" value="UniProtKB"/>
</dbReference>
<dbReference type="GO" id="GO:0005737">
    <property type="term" value="C:cytoplasm"/>
    <property type="evidence" value="ECO:0000250"/>
    <property type="project" value="UniProtKB"/>
</dbReference>
<dbReference type="GO" id="GO:0060076">
    <property type="term" value="C:excitatory synapse"/>
    <property type="evidence" value="ECO:0000250"/>
    <property type="project" value="UniProtKB"/>
</dbReference>
<dbReference type="GO" id="GO:0005615">
    <property type="term" value="C:extracellular space"/>
    <property type="evidence" value="ECO:0000250"/>
    <property type="project" value="UniProtKB"/>
</dbReference>
<dbReference type="GO" id="GO:0097060">
    <property type="term" value="C:synaptic membrane"/>
    <property type="evidence" value="ECO:0000250"/>
    <property type="project" value="UniProtKB"/>
</dbReference>
<dbReference type="GO" id="GO:0036458">
    <property type="term" value="F:hepatocyte growth factor binding"/>
    <property type="evidence" value="ECO:0000250"/>
    <property type="project" value="UniProtKB"/>
</dbReference>
<dbReference type="GO" id="GO:0042802">
    <property type="term" value="F:identical protein binding"/>
    <property type="evidence" value="ECO:0000250"/>
    <property type="project" value="UniProtKB"/>
</dbReference>
<dbReference type="GO" id="GO:0005102">
    <property type="term" value="F:signaling receptor binding"/>
    <property type="evidence" value="ECO:0000250"/>
    <property type="project" value="UniProtKB"/>
</dbReference>
<dbReference type="GO" id="GO:0001525">
    <property type="term" value="P:angiogenesis"/>
    <property type="evidence" value="ECO:0007669"/>
    <property type="project" value="UniProtKB-KW"/>
</dbReference>
<dbReference type="GO" id="GO:0048870">
    <property type="term" value="P:cell motility"/>
    <property type="evidence" value="ECO:0000250"/>
    <property type="project" value="UniProtKB"/>
</dbReference>
<dbReference type="GO" id="GO:0098609">
    <property type="term" value="P:cell-cell adhesion"/>
    <property type="evidence" value="ECO:0000250"/>
    <property type="project" value="UniProtKB"/>
</dbReference>
<dbReference type="GO" id="GO:0090050">
    <property type="term" value="P:positive regulation of cell migration involved in sprouting angiogenesis"/>
    <property type="evidence" value="ECO:0000250"/>
    <property type="project" value="UniProtKB"/>
</dbReference>
<dbReference type="GO" id="GO:0051965">
    <property type="term" value="P:positive regulation of synapse assembly"/>
    <property type="evidence" value="ECO:0000250"/>
    <property type="project" value="UniProtKB"/>
</dbReference>
<dbReference type="GO" id="GO:0042325">
    <property type="term" value="P:regulation of phosphorylation"/>
    <property type="evidence" value="ECO:0000250"/>
    <property type="project" value="UniProtKB"/>
</dbReference>
<dbReference type="CDD" id="cd00033">
    <property type="entry name" value="CCP"/>
    <property type="match status" value="3"/>
</dbReference>
<dbReference type="FunFam" id="2.10.70.10:FF:000024">
    <property type="entry name" value="Sushi repeat-containing protein SRPX"/>
    <property type="match status" value="1"/>
</dbReference>
<dbReference type="FunFam" id="2.10.70.10:FF:000073">
    <property type="entry name" value="Sushi repeat-containing protein SRPX2"/>
    <property type="match status" value="1"/>
</dbReference>
<dbReference type="FunFam" id="2.10.70.10:FF:000058">
    <property type="entry name" value="sushi repeat-containing protein SRPX2"/>
    <property type="match status" value="1"/>
</dbReference>
<dbReference type="Gene3D" id="2.10.70.10">
    <property type="entry name" value="Complement Module, domain 1"/>
    <property type="match status" value="3"/>
</dbReference>
<dbReference type="InterPro" id="IPR025232">
    <property type="entry name" value="DUF4174"/>
</dbReference>
<dbReference type="InterPro" id="IPR003410">
    <property type="entry name" value="HYR_dom"/>
</dbReference>
<dbReference type="InterPro" id="IPR043555">
    <property type="entry name" value="SRPX-like"/>
</dbReference>
<dbReference type="InterPro" id="IPR035976">
    <property type="entry name" value="Sushi/SCR/CCP_sf"/>
</dbReference>
<dbReference type="InterPro" id="IPR000436">
    <property type="entry name" value="Sushi_SCR_CCP_dom"/>
</dbReference>
<dbReference type="PANTHER" id="PTHR46343">
    <property type="entry name" value="HYR DOMAIN-CONTAINING PROTEIN"/>
    <property type="match status" value="1"/>
</dbReference>
<dbReference type="PANTHER" id="PTHR46343:SF3">
    <property type="entry name" value="SUSHI REPEAT-CONTAINING PROTEIN SRPX2"/>
    <property type="match status" value="1"/>
</dbReference>
<dbReference type="Pfam" id="PF13778">
    <property type="entry name" value="DUF4174"/>
    <property type="match status" value="1"/>
</dbReference>
<dbReference type="Pfam" id="PF02494">
    <property type="entry name" value="HYR"/>
    <property type="match status" value="1"/>
</dbReference>
<dbReference type="Pfam" id="PF00084">
    <property type="entry name" value="Sushi"/>
    <property type="match status" value="3"/>
</dbReference>
<dbReference type="SMART" id="SM00032">
    <property type="entry name" value="CCP"/>
    <property type="match status" value="3"/>
</dbReference>
<dbReference type="SUPFAM" id="SSF57535">
    <property type="entry name" value="Complement control module/SCR domain"/>
    <property type="match status" value="3"/>
</dbReference>
<dbReference type="PROSITE" id="PS50825">
    <property type="entry name" value="HYR"/>
    <property type="match status" value="1"/>
</dbReference>
<dbReference type="PROSITE" id="PS50923">
    <property type="entry name" value="SUSHI"/>
    <property type="match status" value="3"/>
</dbReference>
<comment type="function">
    <text evidence="1">Acts as a ligand for the urokinase plasminogen activator surface receptor. Plays a role in angiogenesis by inducing endothelial cell migration and the formation of vascular network (cords). Involved in cellular migration and adhesion. Increases the phosphorylation levels of FAK. Interacts with and increases the mitogenic activity of HGF. Promotes synapse formation (By similarity).</text>
</comment>
<comment type="subunit">
    <text evidence="1">Forms homooligomers (By similarity). Interacts with PLAUR (via the UPAR/Ly6 domains), ADAMTS4 and CTSB. Interacts with HGF; the interaction increases the mitogenic activity of HGF (By similarity).</text>
</comment>
<comment type="subcellular location">
    <subcellularLocation>
        <location evidence="2">Secreted</location>
    </subcellularLocation>
    <subcellularLocation>
        <location evidence="1">Cytoplasm</location>
    </subcellularLocation>
    <subcellularLocation>
        <location evidence="1">Cell surface</location>
    </subcellularLocation>
    <subcellularLocation>
        <location evidence="1">Synapse</location>
    </subcellularLocation>
</comment>
<comment type="PTM">
    <text evidence="2">Contains chondroitin sulfate chains.</text>
</comment>
<accession>Q5EA25</accession>
<feature type="signal peptide" evidence="3">
    <location>
        <begin position="1"/>
        <end position="23"/>
    </location>
</feature>
<feature type="chain" id="PRO_0000274524" description="Sushi repeat-containing protein SRPX2">
    <location>
        <begin position="24"/>
        <end position="465"/>
    </location>
</feature>
<feature type="domain" description="Sushi 1" evidence="5">
    <location>
        <begin position="69"/>
        <end position="119"/>
    </location>
</feature>
<feature type="domain" description="Sushi 2" evidence="5">
    <location>
        <begin position="120"/>
        <end position="178"/>
    </location>
</feature>
<feature type="domain" description="HYR" evidence="4">
    <location>
        <begin position="177"/>
        <end position="261"/>
    </location>
</feature>
<feature type="domain" description="Sushi 3" evidence="5">
    <location>
        <begin position="262"/>
        <end position="321"/>
    </location>
</feature>
<feature type="disulfide bond" evidence="5">
    <location>
        <begin position="71"/>
        <end position="105"/>
    </location>
</feature>
<feature type="disulfide bond" evidence="5">
    <location>
        <begin position="91"/>
        <end position="117"/>
    </location>
</feature>
<feature type="disulfide bond" evidence="5">
    <location>
        <begin position="122"/>
        <end position="163"/>
    </location>
</feature>
<feature type="disulfide bond" evidence="5">
    <location>
        <begin position="149"/>
        <end position="176"/>
    </location>
</feature>
<feature type="disulfide bond" evidence="5">
    <location>
        <begin position="264"/>
        <end position="306"/>
    </location>
</feature>
<feature type="disulfide bond" evidence="5">
    <location>
        <begin position="292"/>
        <end position="319"/>
    </location>
</feature>
<keyword id="KW-0037">Angiogenesis</keyword>
<keyword id="KW-0130">Cell adhesion</keyword>
<keyword id="KW-0963">Cytoplasm</keyword>
<keyword id="KW-1015">Disulfide bond</keyword>
<keyword id="KW-0325">Glycoprotein</keyword>
<keyword id="KW-0654">Proteoglycan</keyword>
<keyword id="KW-1185">Reference proteome</keyword>
<keyword id="KW-0677">Repeat</keyword>
<keyword id="KW-0964">Secreted</keyword>
<keyword id="KW-0732">Signal</keyword>
<keyword id="KW-0768">Sushi</keyword>
<keyword id="KW-0770">Synapse</keyword>
<gene>
    <name type="primary">SRPX2</name>
</gene>
<organism>
    <name type="scientific">Bos taurus</name>
    <name type="common">Bovine</name>
    <dbReference type="NCBI Taxonomy" id="9913"/>
    <lineage>
        <taxon>Eukaryota</taxon>
        <taxon>Metazoa</taxon>
        <taxon>Chordata</taxon>
        <taxon>Craniata</taxon>
        <taxon>Vertebrata</taxon>
        <taxon>Euteleostomi</taxon>
        <taxon>Mammalia</taxon>
        <taxon>Eutheria</taxon>
        <taxon>Laurasiatheria</taxon>
        <taxon>Artiodactyla</taxon>
        <taxon>Ruminantia</taxon>
        <taxon>Pecora</taxon>
        <taxon>Bovidae</taxon>
        <taxon>Bovinae</taxon>
        <taxon>Bos</taxon>
    </lineage>
</organism>
<reference key="1">
    <citation type="journal article" date="2005" name="BMC Genomics">
        <title>Characterization of 954 bovine full-CDS cDNA sequences.</title>
        <authorList>
            <person name="Harhay G.P."/>
            <person name="Sonstegard T.S."/>
            <person name="Keele J.W."/>
            <person name="Heaton M.P."/>
            <person name="Clawson M.L."/>
            <person name="Snelling W.M."/>
            <person name="Wiedmann R.T."/>
            <person name="Van Tassell C.P."/>
            <person name="Smith T.P.L."/>
        </authorList>
    </citation>
    <scope>NUCLEOTIDE SEQUENCE [LARGE SCALE MRNA]</scope>
</reference>
<evidence type="ECO:0000250" key="1"/>
<evidence type="ECO:0000250" key="2">
    <source>
        <dbReference type="UniProtKB" id="O60687"/>
    </source>
</evidence>
<evidence type="ECO:0000255" key="3"/>
<evidence type="ECO:0000255" key="4">
    <source>
        <dbReference type="PROSITE-ProRule" id="PRU00113"/>
    </source>
</evidence>
<evidence type="ECO:0000255" key="5">
    <source>
        <dbReference type="PROSITE-ProRule" id="PRU00302"/>
    </source>
</evidence>